<gene>
    <name evidence="1" type="primary">gcvT</name>
    <name type="ordered locus">Smal_3073</name>
</gene>
<proteinExistence type="inferred from homology"/>
<evidence type="ECO:0000255" key="1">
    <source>
        <dbReference type="HAMAP-Rule" id="MF_00259"/>
    </source>
</evidence>
<dbReference type="EC" id="2.1.2.10" evidence="1"/>
<dbReference type="EMBL" id="CP001111">
    <property type="protein sequence ID" value="ACF52772.1"/>
    <property type="molecule type" value="Genomic_DNA"/>
</dbReference>
<dbReference type="RefSeq" id="WP_012511868.1">
    <property type="nucleotide sequence ID" value="NC_011071.1"/>
</dbReference>
<dbReference type="SMR" id="B4SSE0"/>
<dbReference type="STRING" id="391008.Smal_3073"/>
<dbReference type="KEGG" id="smt:Smal_3073"/>
<dbReference type="eggNOG" id="COG0404">
    <property type="taxonomic scope" value="Bacteria"/>
</dbReference>
<dbReference type="HOGENOM" id="CLU_007884_10_2_6"/>
<dbReference type="OrthoDB" id="9774591at2"/>
<dbReference type="Proteomes" id="UP000001867">
    <property type="component" value="Chromosome"/>
</dbReference>
<dbReference type="GO" id="GO:0005829">
    <property type="term" value="C:cytosol"/>
    <property type="evidence" value="ECO:0007669"/>
    <property type="project" value="TreeGrafter"/>
</dbReference>
<dbReference type="GO" id="GO:0005960">
    <property type="term" value="C:glycine cleavage complex"/>
    <property type="evidence" value="ECO:0007669"/>
    <property type="project" value="InterPro"/>
</dbReference>
<dbReference type="GO" id="GO:0004047">
    <property type="term" value="F:aminomethyltransferase activity"/>
    <property type="evidence" value="ECO:0007669"/>
    <property type="project" value="UniProtKB-UniRule"/>
</dbReference>
<dbReference type="GO" id="GO:0008483">
    <property type="term" value="F:transaminase activity"/>
    <property type="evidence" value="ECO:0007669"/>
    <property type="project" value="UniProtKB-KW"/>
</dbReference>
<dbReference type="GO" id="GO:0019464">
    <property type="term" value="P:glycine decarboxylation via glycine cleavage system"/>
    <property type="evidence" value="ECO:0007669"/>
    <property type="project" value="UniProtKB-UniRule"/>
</dbReference>
<dbReference type="FunFam" id="2.40.30.110:FF:000001">
    <property type="entry name" value="Aminomethyltransferase"/>
    <property type="match status" value="1"/>
</dbReference>
<dbReference type="FunFam" id="3.30.70.1400:FF:000001">
    <property type="entry name" value="Aminomethyltransferase"/>
    <property type="match status" value="1"/>
</dbReference>
<dbReference type="FunFam" id="4.10.1250.10:FF:000001">
    <property type="entry name" value="Aminomethyltransferase"/>
    <property type="match status" value="1"/>
</dbReference>
<dbReference type="Gene3D" id="2.40.30.110">
    <property type="entry name" value="Aminomethyltransferase beta-barrel domains"/>
    <property type="match status" value="1"/>
</dbReference>
<dbReference type="Gene3D" id="3.30.70.1400">
    <property type="entry name" value="Aminomethyltransferase beta-barrel domains"/>
    <property type="match status" value="1"/>
</dbReference>
<dbReference type="Gene3D" id="4.10.1250.10">
    <property type="entry name" value="Aminomethyltransferase fragment"/>
    <property type="match status" value="1"/>
</dbReference>
<dbReference type="Gene3D" id="3.30.1360.120">
    <property type="entry name" value="Probable tRNA modification gtpase trme, domain 1"/>
    <property type="match status" value="1"/>
</dbReference>
<dbReference type="HAMAP" id="MF_00259">
    <property type="entry name" value="GcvT"/>
    <property type="match status" value="1"/>
</dbReference>
<dbReference type="InterPro" id="IPR006223">
    <property type="entry name" value="GCS_T"/>
</dbReference>
<dbReference type="InterPro" id="IPR022903">
    <property type="entry name" value="GCS_T_bac"/>
</dbReference>
<dbReference type="InterPro" id="IPR013977">
    <property type="entry name" value="GCST_C"/>
</dbReference>
<dbReference type="InterPro" id="IPR006222">
    <property type="entry name" value="GCV_T_N"/>
</dbReference>
<dbReference type="InterPro" id="IPR028896">
    <property type="entry name" value="GcvT/YgfZ/DmdA"/>
</dbReference>
<dbReference type="InterPro" id="IPR029043">
    <property type="entry name" value="GcvT/YgfZ_C"/>
</dbReference>
<dbReference type="InterPro" id="IPR027266">
    <property type="entry name" value="TrmE/GcvT_dom1"/>
</dbReference>
<dbReference type="NCBIfam" id="TIGR00528">
    <property type="entry name" value="gcvT"/>
    <property type="match status" value="1"/>
</dbReference>
<dbReference type="NCBIfam" id="NF001567">
    <property type="entry name" value="PRK00389.1"/>
    <property type="match status" value="1"/>
</dbReference>
<dbReference type="PANTHER" id="PTHR43757">
    <property type="entry name" value="AMINOMETHYLTRANSFERASE"/>
    <property type="match status" value="1"/>
</dbReference>
<dbReference type="PANTHER" id="PTHR43757:SF2">
    <property type="entry name" value="AMINOMETHYLTRANSFERASE, MITOCHONDRIAL"/>
    <property type="match status" value="1"/>
</dbReference>
<dbReference type="Pfam" id="PF01571">
    <property type="entry name" value="GCV_T"/>
    <property type="match status" value="1"/>
</dbReference>
<dbReference type="Pfam" id="PF08669">
    <property type="entry name" value="GCV_T_C"/>
    <property type="match status" value="1"/>
</dbReference>
<dbReference type="PIRSF" id="PIRSF006487">
    <property type="entry name" value="GcvT"/>
    <property type="match status" value="1"/>
</dbReference>
<dbReference type="SUPFAM" id="SSF101790">
    <property type="entry name" value="Aminomethyltransferase beta-barrel domain"/>
    <property type="match status" value="1"/>
</dbReference>
<dbReference type="SUPFAM" id="SSF103025">
    <property type="entry name" value="Folate-binding domain"/>
    <property type="match status" value="1"/>
</dbReference>
<feature type="chain" id="PRO_1000114119" description="Aminomethyltransferase">
    <location>
        <begin position="1"/>
        <end position="370"/>
    </location>
</feature>
<keyword id="KW-0032">Aminotransferase</keyword>
<keyword id="KW-0808">Transferase</keyword>
<accession>B4SSE0</accession>
<reference key="1">
    <citation type="submission" date="2008-06" db="EMBL/GenBank/DDBJ databases">
        <title>Complete sequence of Stenotrophomonas maltophilia R551-3.</title>
        <authorList>
            <consortium name="US DOE Joint Genome Institute"/>
            <person name="Lucas S."/>
            <person name="Copeland A."/>
            <person name="Lapidus A."/>
            <person name="Glavina del Rio T."/>
            <person name="Dalin E."/>
            <person name="Tice H."/>
            <person name="Pitluck S."/>
            <person name="Chain P."/>
            <person name="Malfatti S."/>
            <person name="Shin M."/>
            <person name="Vergez L."/>
            <person name="Lang D."/>
            <person name="Schmutz J."/>
            <person name="Larimer F."/>
            <person name="Land M."/>
            <person name="Hauser L."/>
            <person name="Kyrpides N."/>
            <person name="Mikhailova N."/>
            <person name="Taghavi S."/>
            <person name="Monchy S."/>
            <person name="Newman L."/>
            <person name="Vangronsveld J."/>
            <person name="van der Lelie D."/>
            <person name="Richardson P."/>
        </authorList>
    </citation>
    <scope>NUCLEOTIDE SEQUENCE [LARGE SCALE GENOMIC DNA]</scope>
    <source>
        <strain>R551-3</strain>
    </source>
</reference>
<name>GCST_STRM5</name>
<sequence>MTQKTLLNDTHRALGAKMVDFGGWDMPIHYGSQLDEHHLVRRESGVFDVSHMTVVDLRGDQVKPFLRRLLANSVDKLKVTGKALYSCMLNPRGGVIDDLIVYYLGDDFFRMVVNASTREKDLAWLREQAAPFGVTVEQRPDLAILAVQGPQARDIVIGLAREADRAALTKLGRFAALQAQSDDGIELFVARTGYTGEDGFEILLPQDAVVAFWNRLLAAGVKPAGLGARDTLRLEAGMNLYGQDMDEAISPYEAALAWTVSLDEGRDFIGRDVLEAQKAAGNARQMIGLVMDEKGVLRHGQAVTTAGGQGEILSGTFSPTLAKGIAFARVPAGELGQVTVDIRGRQVPVRVVKFPFVREGQAQPGVLGDA</sequence>
<comment type="function">
    <text evidence="1">The glycine cleavage system catalyzes the degradation of glycine.</text>
</comment>
<comment type="catalytic activity">
    <reaction evidence="1">
        <text>N(6)-[(R)-S(8)-aminomethyldihydrolipoyl]-L-lysyl-[protein] + (6S)-5,6,7,8-tetrahydrofolate = N(6)-[(R)-dihydrolipoyl]-L-lysyl-[protein] + (6R)-5,10-methylene-5,6,7,8-tetrahydrofolate + NH4(+)</text>
        <dbReference type="Rhea" id="RHEA:16945"/>
        <dbReference type="Rhea" id="RHEA-COMP:10475"/>
        <dbReference type="Rhea" id="RHEA-COMP:10492"/>
        <dbReference type="ChEBI" id="CHEBI:15636"/>
        <dbReference type="ChEBI" id="CHEBI:28938"/>
        <dbReference type="ChEBI" id="CHEBI:57453"/>
        <dbReference type="ChEBI" id="CHEBI:83100"/>
        <dbReference type="ChEBI" id="CHEBI:83143"/>
        <dbReference type="EC" id="2.1.2.10"/>
    </reaction>
</comment>
<comment type="subunit">
    <text evidence="1">The glycine cleavage system is composed of four proteins: P, T, L and H.</text>
</comment>
<comment type="similarity">
    <text evidence="1">Belongs to the GcvT family.</text>
</comment>
<organism>
    <name type="scientific">Stenotrophomonas maltophilia (strain R551-3)</name>
    <dbReference type="NCBI Taxonomy" id="391008"/>
    <lineage>
        <taxon>Bacteria</taxon>
        <taxon>Pseudomonadati</taxon>
        <taxon>Pseudomonadota</taxon>
        <taxon>Gammaproteobacteria</taxon>
        <taxon>Lysobacterales</taxon>
        <taxon>Lysobacteraceae</taxon>
        <taxon>Stenotrophomonas</taxon>
        <taxon>Stenotrophomonas maltophilia group</taxon>
    </lineage>
</organism>
<protein>
    <recommendedName>
        <fullName evidence="1">Aminomethyltransferase</fullName>
        <ecNumber evidence="1">2.1.2.10</ecNumber>
    </recommendedName>
    <alternativeName>
        <fullName evidence="1">Glycine cleavage system T protein</fullName>
    </alternativeName>
</protein>